<protein>
    <recommendedName>
        <fullName>V-type proton ATPase subunit D</fullName>
        <shortName>V-ATPase subunit D</shortName>
    </recommendedName>
    <alternativeName>
        <fullName>Vacuolar H(+)-ATPase subunit D</fullName>
    </alternativeName>
    <alternativeName>
        <fullName>Vacuolar proton pump subunit D</fullName>
    </alternativeName>
</protein>
<keyword id="KW-0375">Hydrogen ion transport</keyword>
<keyword id="KW-0406">Ion transport</keyword>
<keyword id="KW-0472">Membrane</keyword>
<keyword id="KW-0597">Phosphoprotein</keyword>
<keyword id="KW-1185">Reference proteome</keyword>
<keyword id="KW-0813">Transport</keyword>
<keyword id="KW-0926">Vacuole</keyword>
<feature type="chain" id="PRO_0000144240" description="V-type proton ATPase subunit D">
    <location>
        <begin position="1"/>
        <end position="261"/>
    </location>
</feature>
<feature type="modified residue" description="Phosphoserine" evidence="4">
    <location>
        <position position="241"/>
    </location>
</feature>
<feature type="sequence conflict" description="In Ref. 1; CAB46439." evidence="3" ref="1">
    <original>D</original>
    <variation>E</variation>
    <location>
        <position position="61"/>
    </location>
</feature>
<accession>Q9XGM1</accession>
<accession>Q9LXS8</accession>
<name>VATD_ARATH</name>
<reference key="1">
    <citation type="journal article" date="1999" name="Biochim. Biophys. Acta">
        <title>Subunit D of the vacuolar H+-ATPase of Arabidopsis thaliana.</title>
        <authorList>
            <person name="Kluge C."/>
            <person name="Golldack D."/>
            <person name="Dietz K.-J."/>
        </authorList>
    </citation>
    <scope>NUCLEOTIDE SEQUENCE [MRNA]</scope>
    <source>
        <strain>cv. Columbia</strain>
    </source>
</reference>
<reference key="2">
    <citation type="journal article" date="2000" name="Nature">
        <title>Sequence and analysis of chromosome 3 of the plant Arabidopsis thaliana.</title>
        <authorList>
            <person name="Salanoubat M."/>
            <person name="Lemcke K."/>
            <person name="Rieger M."/>
            <person name="Ansorge W."/>
            <person name="Unseld M."/>
            <person name="Fartmann B."/>
            <person name="Valle G."/>
            <person name="Bloecker H."/>
            <person name="Perez-Alonso M."/>
            <person name="Obermaier B."/>
            <person name="Delseny M."/>
            <person name="Boutry M."/>
            <person name="Grivell L.A."/>
            <person name="Mache R."/>
            <person name="Puigdomenech P."/>
            <person name="De Simone V."/>
            <person name="Choisne N."/>
            <person name="Artiguenave F."/>
            <person name="Robert C."/>
            <person name="Brottier P."/>
            <person name="Wincker P."/>
            <person name="Cattolico L."/>
            <person name="Weissenbach J."/>
            <person name="Saurin W."/>
            <person name="Quetier F."/>
            <person name="Schaefer M."/>
            <person name="Mueller-Auer S."/>
            <person name="Gabel C."/>
            <person name="Fuchs M."/>
            <person name="Benes V."/>
            <person name="Wurmbach E."/>
            <person name="Drzonek H."/>
            <person name="Erfle H."/>
            <person name="Jordan N."/>
            <person name="Bangert S."/>
            <person name="Wiedelmann R."/>
            <person name="Kranz H."/>
            <person name="Voss H."/>
            <person name="Holland R."/>
            <person name="Brandt P."/>
            <person name="Nyakatura G."/>
            <person name="Vezzi A."/>
            <person name="D'Angelo M."/>
            <person name="Pallavicini A."/>
            <person name="Toppo S."/>
            <person name="Simionati B."/>
            <person name="Conrad A."/>
            <person name="Hornischer K."/>
            <person name="Kauer G."/>
            <person name="Loehnert T.-H."/>
            <person name="Nordsiek G."/>
            <person name="Reichelt J."/>
            <person name="Scharfe M."/>
            <person name="Schoen O."/>
            <person name="Bargues M."/>
            <person name="Terol J."/>
            <person name="Climent J."/>
            <person name="Navarro P."/>
            <person name="Collado C."/>
            <person name="Perez-Perez A."/>
            <person name="Ottenwaelder B."/>
            <person name="Duchemin D."/>
            <person name="Cooke R."/>
            <person name="Laudie M."/>
            <person name="Berger-Llauro C."/>
            <person name="Purnelle B."/>
            <person name="Masuy D."/>
            <person name="de Haan M."/>
            <person name="Maarse A.C."/>
            <person name="Alcaraz J.-P."/>
            <person name="Cottet A."/>
            <person name="Casacuberta E."/>
            <person name="Monfort A."/>
            <person name="Argiriou A."/>
            <person name="Flores M."/>
            <person name="Liguori R."/>
            <person name="Vitale D."/>
            <person name="Mannhaupt G."/>
            <person name="Haase D."/>
            <person name="Schoof H."/>
            <person name="Rudd S."/>
            <person name="Zaccaria P."/>
            <person name="Mewes H.-W."/>
            <person name="Mayer K.F.X."/>
            <person name="Kaul S."/>
            <person name="Town C.D."/>
            <person name="Koo H.L."/>
            <person name="Tallon L.J."/>
            <person name="Jenkins J."/>
            <person name="Rooney T."/>
            <person name="Rizzo M."/>
            <person name="Walts A."/>
            <person name="Utterback T."/>
            <person name="Fujii C.Y."/>
            <person name="Shea T.P."/>
            <person name="Creasy T.H."/>
            <person name="Haas B."/>
            <person name="Maiti R."/>
            <person name="Wu D."/>
            <person name="Peterson J."/>
            <person name="Van Aken S."/>
            <person name="Pai G."/>
            <person name="Militscher J."/>
            <person name="Sellers P."/>
            <person name="Gill J.E."/>
            <person name="Feldblyum T.V."/>
            <person name="Preuss D."/>
            <person name="Lin X."/>
            <person name="Nierman W.C."/>
            <person name="Salzberg S.L."/>
            <person name="White O."/>
            <person name="Venter J.C."/>
            <person name="Fraser C.M."/>
            <person name="Kaneko T."/>
            <person name="Nakamura Y."/>
            <person name="Sato S."/>
            <person name="Kato T."/>
            <person name="Asamizu E."/>
            <person name="Sasamoto S."/>
            <person name="Kimura T."/>
            <person name="Idesawa K."/>
            <person name="Kawashima K."/>
            <person name="Kishida Y."/>
            <person name="Kiyokawa C."/>
            <person name="Kohara M."/>
            <person name="Matsumoto M."/>
            <person name="Matsuno A."/>
            <person name="Muraki A."/>
            <person name="Nakayama S."/>
            <person name="Nakazaki N."/>
            <person name="Shinpo S."/>
            <person name="Takeuchi C."/>
            <person name="Wada T."/>
            <person name="Watanabe A."/>
            <person name="Yamada M."/>
            <person name="Yasuda M."/>
            <person name="Tabata S."/>
        </authorList>
    </citation>
    <scope>NUCLEOTIDE SEQUENCE [LARGE SCALE GENOMIC DNA]</scope>
    <source>
        <strain>cv. Columbia</strain>
    </source>
</reference>
<reference key="3">
    <citation type="journal article" date="2017" name="Plant J.">
        <title>Araport11: a complete reannotation of the Arabidopsis thaliana reference genome.</title>
        <authorList>
            <person name="Cheng C.Y."/>
            <person name="Krishnakumar V."/>
            <person name="Chan A.P."/>
            <person name="Thibaud-Nissen F."/>
            <person name="Schobel S."/>
            <person name="Town C.D."/>
        </authorList>
    </citation>
    <scope>GENOME REANNOTATION</scope>
    <source>
        <strain>cv. Columbia</strain>
    </source>
</reference>
<reference key="4">
    <citation type="journal article" date="2003" name="Science">
        <title>Empirical analysis of transcriptional activity in the Arabidopsis genome.</title>
        <authorList>
            <person name="Yamada K."/>
            <person name="Lim J."/>
            <person name="Dale J.M."/>
            <person name="Chen H."/>
            <person name="Shinn P."/>
            <person name="Palm C.J."/>
            <person name="Southwick A.M."/>
            <person name="Wu H.C."/>
            <person name="Kim C.J."/>
            <person name="Nguyen M."/>
            <person name="Pham P.K."/>
            <person name="Cheuk R.F."/>
            <person name="Karlin-Newmann G."/>
            <person name="Liu S.X."/>
            <person name="Lam B."/>
            <person name="Sakano H."/>
            <person name="Wu T."/>
            <person name="Yu G."/>
            <person name="Miranda M."/>
            <person name="Quach H.L."/>
            <person name="Tripp M."/>
            <person name="Chang C.H."/>
            <person name="Lee J.M."/>
            <person name="Toriumi M.J."/>
            <person name="Chan M.M."/>
            <person name="Tang C.C."/>
            <person name="Onodera C.S."/>
            <person name="Deng J.M."/>
            <person name="Akiyama K."/>
            <person name="Ansari Y."/>
            <person name="Arakawa T."/>
            <person name="Banh J."/>
            <person name="Banno F."/>
            <person name="Bowser L."/>
            <person name="Brooks S.Y."/>
            <person name="Carninci P."/>
            <person name="Chao Q."/>
            <person name="Choy N."/>
            <person name="Enju A."/>
            <person name="Goldsmith A.D."/>
            <person name="Gurjal M."/>
            <person name="Hansen N.F."/>
            <person name="Hayashizaki Y."/>
            <person name="Johnson-Hopson C."/>
            <person name="Hsuan V.W."/>
            <person name="Iida K."/>
            <person name="Karnes M."/>
            <person name="Khan S."/>
            <person name="Koesema E."/>
            <person name="Ishida J."/>
            <person name="Jiang P.X."/>
            <person name="Jones T."/>
            <person name="Kawai J."/>
            <person name="Kamiya A."/>
            <person name="Meyers C."/>
            <person name="Nakajima M."/>
            <person name="Narusaka M."/>
            <person name="Seki M."/>
            <person name="Sakurai T."/>
            <person name="Satou M."/>
            <person name="Tamse R."/>
            <person name="Vaysberg M."/>
            <person name="Wallender E.K."/>
            <person name="Wong C."/>
            <person name="Yamamura Y."/>
            <person name="Yuan S."/>
            <person name="Shinozaki K."/>
            <person name="Davis R.W."/>
            <person name="Theologis A."/>
            <person name="Ecker J.R."/>
        </authorList>
    </citation>
    <scope>NUCLEOTIDE SEQUENCE [LARGE SCALE MRNA]</scope>
    <source>
        <strain>cv. Columbia</strain>
    </source>
</reference>
<reference key="5">
    <citation type="journal article" date="2002" name="Trends Plant Sci.">
        <title>A simple nomenclature for a complex proton pump: VHA genes encode the vacuolar H(+)-ATPase.</title>
        <authorList>
            <person name="Sze H."/>
            <person name="Schumacher K."/>
            <person name="Mueller M.L."/>
            <person name="Padmanaban S."/>
            <person name="Taiz L."/>
        </authorList>
    </citation>
    <scope>GENE FAMILY</scope>
    <scope>NOMENCLATURE</scope>
</reference>
<reference key="6">
    <citation type="journal article" date="2007" name="Mol. Cell. Proteomics">
        <title>A proteomics dissection of Arabidopsis thaliana vacuoles isolated from cell culture.</title>
        <authorList>
            <person name="Jaquinod M."/>
            <person name="Villiers F."/>
            <person name="Kieffer-Jaquinod S."/>
            <person name="Hugouvieux V."/>
            <person name="Bruley C."/>
            <person name="Garin J."/>
            <person name="Bourguignon J."/>
        </authorList>
    </citation>
    <scope>IDENTIFICATION BY MASS SPECTROMETRY</scope>
    <scope>SUBCELLULAR LOCATION [LARGE SCALE ANALYSIS]</scope>
</reference>
<reference key="7">
    <citation type="journal article" date="2009" name="Plant Physiol.">
        <title>Large-scale Arabidopsis phosphoproteome profiling reveals novel chloroplast kinase substrates and phosphorylation networks.</title>
        <authorList>
            <person name="Reiland S."/>
            <person name="Messerli G."/>
            <person name="Baerenfaller K."/>
            <person name="Gerrits B."/>
            <person name="Endler A."/>
            <person name="Grossmann J."/>
            <person name="Gruissem W."/>
            <person name="Baginsky S."/>
        </authorList>
    </citation>
    <scope>PHOSPHORYLATION [LARGE SCALE ANALYSIS] AT SER-241</scope>
    <scope>IDENTIFICATION BY MASS SPECTROMETRY [LARGE SCALE ANALYSIS]</scope>
</reference>
<gene>
    <name type="primary">VHA-D</name>
    <name type="synonym">VATD</name>
    <name type="synonym">VATPD</name>
    <name type="ordered locus">At3g58730</name>
    <name type="ORF">T20N10_80</name>
</gene>
<organism>
    <name type="scientific">Arabidopsis thaliana</name>
    <name type="common">Mouse-ear cress</name>
    <dbReference type="NCBI Taxonomy" id="3702"/>
    <lineage>
        <taxon>Eukaryota</taxon>
        <taxon>Viridiplantae</taxon>
        <taxon>Streptophyta</taxon>
        <taxon>Embryophyta</taxon>
        <taxon>Tracheophyta</taxon>
        <taxon>Spermatophyta</taxon>
        <taxon>Magnoliopsida</taxon>
        <taxon>eudicotyledons</taxon>
        <taxon>Gunneridae</taxon>
        <taxon>Pentapetalae</taxon>
        <taxon>rosids</taxon>
        <taxon>malvids</taxon>
        <taxon>Brassicales</taxon>
        <taxon>Brassicaceae</taxon>
        <taxon>Camelineae</taxon>
        <taxon>Arabidopsis</taxon>
    </lineage>
</organism>
<sequence length="261" mass="29059">MAGQNARLNVVPTVTMLGVMKARLVGATRGHALLKKKSDALTVQFRALLKKIVTAKESMGDMMKTSSFALTEVKYVAGDNVKHVVLENVKEATLKVRSRTENIAGVKLPKFDHFSEGETKNDLTGLARGGQQVRACRVAYVKAIEVLVELASLQTSFLTLDEAIKTTNRRVNALENVVKPKLENTISYIKGELDELEREDFFRLKKIQGYKRREVERQAANAKEFAEEMVLEDISMQRGISINAARNFLVGGAEKDSDIIF</sequence>
<proteinExistence type="evidence at protein level"/>
<comment type="function">
    <text evidence="1">Subunit of the peripheral V1 complex of vacuolar ATPase. V-ATPase is responsible for acidifying a variety of intracellular compartments in eukaryotic cells, thus providing most of the energy required for transport processes in the vacuolar system (By similarity).</text>
</comment>
<comment type="subunit">
    <text>V-ATPase is a heteromultimeric enzyme composed of a peripheral catalytic V1 complex (components A to H) attached to an integral membrane V0 proton pore complex (components: a, c, c'', d and e).</text>
</comment>
<comment type="subcellular location">
    <subcellularLocation>
        <location evidence="2">Vacuole membrane</location>
        <topology evidence="3">Peripheral membrane protein</topology>
    </subcellularLocation>
</comment>
<comment type="similarity">
    <text evidence="3">Belongs to the V-ATPase D subunit family.</text>
</comment>
<evidence type="ECO:0000250" key="1"/>
<evidence type="ECO:0000269" key="2">
    <source>
    </source>
</evidence>
<evidence type="ECO:0000305" key="3"/>
<evidence type="ECO:0007744" key="4">
    <source>
    </source>
</evidence>
<dbReference type="EMBL" id="AJ225059">
    <property type="protein sequence ID" value="CAB46439.1"/>
    <property type="molecule type" value="mRNA"/>
</dbReference>
<dbReference type="EMBL" id="AL353032">
    <property type="protein sequence ID" value="CAB88290.1"/>
    <property type="molecule type" value="Genomic_DNA"/>
</dbReference>
<dbReference type="EMBL" id="CP002686">
    <property type="protein sequence ID" value="AEE79824.1"/>
    <property type="molecule type" value="Genomic_DNA"/>
</dbReference>
<dbReference type="EMBL" id="AF428344">
    <property type="protein sequence ID" value="AAL16274.1"/>
    <property type="molecule type" value="mRNA"/>
</dbReference>
<dbReference type="EMBL" id="AY124869">
    <property type="protein sequence ID" value="AAM70578.1"/>
    <property type="molecule type" value="mRNA"/>
</dbReference>
<dbReference type="PIR" id="T49156">
    <property type="entry name" value="T49156"/>
</dbReference>
<dbReference type="PIR" id="T52636">
    <property type="entry name" value="T52636"/>
</dbReference>
<dbReference type="RefSeq" id="NP_191432.1">
    <property type="nucleotide sequence ID" value="NM_115735.5"/>
</dbReference>
<dbReference type="SMR" id="Q9XGM1"/>
<dbReference type="BioGRID" id="10357">
    <property type="interactions" value="10"/>
</dbReference>
<dbReference type="FunCoup" id="Q9XGM1">
    <property type="interactions" value="4097"/>
</dbReference>
<dbReference type="IntAct" id="Q9XGM1">
    <property type="interactions" value="3"/>
</dbReference>
<dbReference type="STRING" id="3702.Q9XGM1"/>
<dbReference type="TCDB" id="3.A.2.2.5">
    <property type="family name" value="the h+- or na+-translocating f-type, v-type and a-type atpase (f-atpase) superfamily"/>
</dbReference>
<dbReference type="iPTMnet" id="Q9XGM1"/>
<dbReference type="PaxDb" id="3702-AT3G58730.1"/>
<dbReference type="ProteomicsDB" id="242318"/>
<dbReference type="EnsemblPlants" id="AT3G58730.1">
    <property type="protein sequence ID" value="AT3G58730.1"/>
    <property type="gene ID" value="AT3G58730"/>
</dbReference>
<dbReference type="GeneID" id="825042"/>
<dbReference type="Gramene" id="AT3G58730.1">
    <property type="protein sequence ID" value="AT3G58730.1"/>
    <property type="gene ID" value="AT3G58730"/>
</dbReference>
<dbReference type="KEGG" id="ath:AT3G58730"/>
<dbReference type="Araport" id="AT3G58730"/>
<dbReference type="TAIR" id="AT3G58730"/>
<dbReference type="eggNOG" id="KOG1647">
    <property type="taxonomic scope" value="Eukaryota"/>
</dbReference>
<dbReference type="HOGENOM" id="CLU_069688_0_0_1"/>
<dbReference type="InParanoid" id="Q9XGM1"/>
<dbReference type="OMA" id="REEFFRM"/>
<dbReference type="OrthoDB" id="1056672at2759"/>
<dbReference type="PhylomeDB" id="Q9XGM1"/>
<dbReference type="PRO" id="PR:Q9XGM1"/>
<dbReference type="Proteomes" id="UP000006548">
    <property type="component" value="Chromosome 3"/>
</dbReference>
<dbReference type="ExpressionAtlas" id="Q9XGM1">
    <property type="expression patterns" value="baseline and differential"/>
</dbReference>
<dbReference type="GO" id="GO:0005829">
    <property type="term" value="C:cytosol"/>
    <property type="evidence" value="ECO:0007005"/>
    <property type="project" value="TAIR"/>
</dbReference>
<dbReference type="GO" id="GO:0005794">
    <property type="term" value="C:Golgi apparatus"/>
    <property type="evidence" value="ECO:0007005"/>
    <property type="project" value="TAIR"/>
</dbReference>
<dbReference type="GO" id="GO:0000325">
    <property type="term" value="C:plant-type vacuole"/>
    <property type="evidence" value="ECO:0007005"/>
    <property type="project" value="TAIR"/>
</dbReference>
<dbReference type="GO" id="GO:0005886">
    <property type="term" value="C:plasma membrane"/>
    <property type="evidence" value="ECO:0007005"/>
    <property type="project" value="TAIR"/>
</dbReference>
<dbReference type="GO" id="GO:0005774">
    <property type="term" value="C:vacuolar membrane"/>
    <property type="evidence" value="ECO:0007005"/>
    <property type="project" value="TAIR"/>
</dbReference>
<dbReference type="GO" id="GO:0005773">
    <property type="term" value="C:vacuole"/>
    <property type="evidence" value="ECO:0007005"/>
    <property type="project" value="TAIR"/>
</dbReference>
<dbReference type="GO" id="GO:0046961">
    <property type="term" value="F:proton-transporting ATPase activity, rotational mechanism"/>
    <property type="evidence" value="ECO:0007669"/>
    <property type="project" value="InterPro"/>
</dbReference>
<dbReference type="FunFam" id="1.10.287.3240:FF:000003">
    <property type="entry name" value="V-type proton ATPase subunit D"/>
    <property type="match status" value="1"/>
</dbReference>
<dbReference type="Gene3D" id="1.10.287.3240">
    <property type="match status" value="1"/>
</dbReference>
<dbReference type="InterPro" id="IPR002699">
    <property type="entry name" value="V_ATPase_D"/>
</dbReference>
<dbReference type="NCBIfam" id="TIGR00309">
    <property type="entry name" value="V_ATPase_subD"/>
    <property type="match status" value="1"/>
</dbReference>
<dbReference type="PANTHER" id="PTHR11671">
    <property type="entry name" value="V-TYPE ATP SYNTHASE SUBUNIT D"/>
    <property type="match status" value="1"/>
</dbReference>
<dbReference type="Pfam" id="PF01813">
    <property type="entry name" value="ATP-synt_D"/>
    <property type="match status" value="1"/>
</dbReference>